<feature type="chain" id="PRO_1000141011" description="Small ribosomal subunit protein uS3">
    <location>
        <begin position="1"/>
        <end position="233"/>
    </location>
</feature>
<feature type="domain" description="KH type-2" evidence="1">
    <location>
        <begin position="39"/>
        <end position="107"/>
    </location>
</feature>
<organism>
    <name type="scientific">Salmonella dublin (strain CT_02021853)</name>
    <dbReference type="NCBI Taxonomy" id="439851"/>
    <lineage>
        <taxon>Bacteria</taxon>
        <taxon>Pseudomonadati</taxon>
        <taxon>Pseudomonadota</taxon>
        <taxon>Gammaproteobacteria</taxon>
        <taxon>Enterobacterales</taxon>
        <taxon>Enterobacteriaceae</taxon>
        <taxon>Salmonella</taxon>
    </lineage>
</organism>
<dbReference type="EMBL" id="CP001144">
    <property type="protein sequence ID" value="ACH74346.1"/>
    <property type="molecule type" value="Genomic_DNA"/>
</dbReference>
<dbReference type="RefSeq" id="WP_000529945.1">
    <property type="nucleotide sequence ID" value="NC_011205.1"/>
</dbReference>
<dbReference type="SMR" id="B5FJK8"/>
<dbReference type="GeneID" id="97603663"/>
<dbReference type="KEGG" id="sed:SeD_A3801"/>
<dbReference type="HOGENOM" id="CLU_058591_0_2_6"/>
<dbReference type="Proteomes" id="UP000008322">
    <property type="component" value="Chromosome"/>
</dbReference>
<dbReference type="GO" id="GO:0022627">
    <property type="term" value="C:cytosolic small ribosomal subunit"/>
    <property type="evidence" value="ECO:0007669"/>
    <property type="project" value="TreeGrafter"/>
</dbReference>
<dbReference type="GO" id="GO:0003729">
    <property type="term" value="F:mRNA binding"/>
    <property type="evidence" value="ECO:0007669"/>
    <property type="project" value="UniProtKB-UniRule"/>
</dbReference>
<dbReference type="GO" id="GO:0019843">
    <property type="term" value="F:rRNA binding"/>
    <property type="evidence" value="ECO:0007669"/>
    <property type="project" value="UniProtKB-UniRule"/>
</dbReference>
<dbReference type="GO" id="GO:0003735">
    <property type="term" value="F:structural constituent of ribosome"/>
    <property type="evidence" value="ECO:0007669"/>
    <property type="project" value="InterPro"/>
</dbReference>
<dbReference type="GO" id="GO:0006412">
    <property type="term" value="P:translation"/>
    <property type="evidence" value="ECO:0007669"/>
    <property type="project" value="UniProtKB-UniRule"/>
</dbReference>
<dbReference type="CDD" id="cd02412">
    <property type="entry name" value="KH-II_30S_S3"/>
    <property type="match status" value="1"/>
</dbReference>
<dbReference type="FunFam" id="3.30.1140.32:FF:000001">
    <property type="entry name" value="30S ribosomal protein S3"/>
    <property type="match status" value="1"/>
</dbReference>
<dbReference type="FunFam" id="3.30.300.20:FF:000001">
    <property type="entry name" value="30S ribosomal protein S3"/>
    <property type="match status" value="1"/>
</dbReference>
<dbReference type="Gene3D" id="3.30.300.20">
    <property type="match status" value="1"/>
</dbReference>
<dbReference type="Gene3D" id="3.30.1140.32">
    <property type="entry name" value="Ribosomal protein S3, C-terminal domain"/>
    <property type="match status" value="1"/>
</dbReference>
<dbReference type="HAMAP" id="MF_01309_B">
    <property type="entry name" value="Ribosomal_uS3_B"/>
    <property type="match status" value="1"/>
</dbReference>
<dbReference type="InterPro" id="IPR004087">
    <property type="entry name" value="KH_dom"/>
</dbReference>
<dbReference type="InterPro" id="IPR015946">
    <property type="entry name" value="KH_dom-like_a/b"/>
</dbReference>
<dbReference type="InterPro" id="IPR004044">
    <property type="entry name" value="KH_dom_type_2"/>
</dbReference>
<dbReference type="InterPro" id="IPR009019">
    <property type="entry name" value="KH_sf_prok-type"/>
</dbReference>
<dbReference type="InterPro" id="IPR036419">
    <property type="entry name" value="Ribosomal_S3_C_sf"/>
</dbReference>
<dbReference type="InterPro" id="IPR005704">
    <property type="entry name" value="Ribosomal_uS3_bac-typ"/>
</dbReference>
<dbReference type="InterPro" id="IPR001351">
    <property type="entry name" value="Ribosomal_uS3_C"/>
</dbReference>
<dbReference type="InterPro" id="IPR018280">
    <property type="entry name" value="Ribosomal_uS3_CS"/>
</dbReference>
<dbReference type="NCBIfam" id="TIGR01009">
    <property type="entry name" value="rpsC_bact"/>
    <property type="match status" value="1"/>
</dbReference>
<dbReference type="PANTHER" id="PTHR11760">
    <property type="entry name" value="30S/40S RIBOSOMAL PROTEIN S3"/>
    <property type="match status" value="1"/>
</dbReference>
<dbReference type="PANTHER" id="PTHR11760:SF19">
    <property type="entry name" value="SMALL RIBOSOMAL SUBUNIT PROTEIN US3C"/>
    <property type="match status" value="1"/>
</dbReference>
<dbReference type="Pfam" id="PF07650">
    <property type="entry name" value="KH_2"/>
    <property type="match status" value="1"/>
</dbReference>
<dbReference type="Pfam" id="PF00189">
    <property type="entry name" value="Ribosomal_S3_C"/>
    <property type="match status" value="1"/>
</dbReference>
<dbReference type="SMART" id="SM00322">
    <property type="entry name" value="KH"/>
    <property type="match status" value="1"/>
</dbReference>
<dbReference type="SUPFAM" id="SSF54814">
    <property type="entry name" value="Prokaryotic type KH domain (KH-domain type II)"/>
    <property type="match status" value="1"/>
</dbReference>
<dbReference type="SUPFAM" id="SSF54821">
    <property type="entry name" value="Ribosomal protein S3 C-terminal domain"/>
    <property type="match status" value="1"/>
</dbReference>
<dbReference type="PROSITE" id="PS50823">
    <property type="entry name" value="KH_TYPE_2"/>
    <property type="match status" value="1"/>
</dbReference>
<dbReference type="PROSITE" id="PS00548">
    <property type="entry name" value="RIBOSOMAL_S3"/>
    <property type="match status" value="1"/>
</dbReference>
<gene>
    <name evidence="1" type="primary">rpsC</name>
    <name type="ordered locus">SeD_A3801</name>
</gene>
<keyword id="KW-0687">Ribonucleoprotein</keyword>
<keyword id="KW-0689">Ribosomal protein</keyword>
<keyword id="KW-0694">RNA-binding</keyword>
<keyword id="KW-0699">rRNA-binding</keyword>
<evidence type="ECO:0000255" key="1">
    <source>
        <dbReference type="HAMAP-Rule" id="MF_01309"/>
    </source>
</evidence>
<evidence type="ECO:0000305" key="2"/>
<sequence length="233" mass="25983">MGQKVHPNGIRLGIVKPWNSTWFANTKEFADNLDSDFKVRQYLTKELAKASVSRIVIERPAKSIRVTIHTARPGIVIGKKGEDVEKLRKVVADIAGVPAQINIAEVRKPELDAKLVADSITSQLERRVMFRRAMKRAVQNAMRLGAKGIKVEVSGRLGGAEIARTEWYREGRVPLHTLRADIDYNTSEAHTTYGVIGVKVWIFKGEILGGMAAVEQPEKPAAQPKKQQRKGRK</sequence>
<accession>B5FJK8</accession>
<comment type="function">
    <text evidence="1">Binds the lower part of the 30S subunit head. Binds mRNA in the 70S ribosome, positioning it for translation.</text>
</comment>
<comment type="subunit">
    <text evidence="1">Part of the 30S ribosomal subunit. Forms a tight complex with proteins S10 and S14.</text>
</comment>
<comment type="similarity">
    <text evidence="1">Belongs to the universal ribosomal protein uS3 family.</text>
</comment>
<proteinExistence type="inferred from homology"/>
<protein>
    <recommendedName>
        <fullName evidence="1">Small ribosomal subunit protein uS3</fullName>
    </recommendedName>
    <alternativeName>
        <fullName evidence="2">30S ribosomal protein S3</fullName>
    </alternativeName>
</protein>
<name>RS3_SALDC</name>
<reference key="1">
    <citation type="journal article" date="2011" name="J. Bacteriol.">
        <title>Comparative genomics of 28 Salmonella enterica isolates: evidence for CRISPR-mediated adaptive sublineage evolution.</title>
        <authorList>
            <person name="Fricke W.F."/>
            <person name="Mammel M.K."/>
            <person name="McDermott P.F."/>
            <person name="Tartera C."/>
            <person name="White D.G."/>
            <person name="Leclerc J.E."/>
            <person name="Ravel J."/>
            <person name="Cebula T.A."/>
        </authorList>
    </citation>
    <scope>NUCLEOTIDE SEQUENCE [LARGE SCALE GENOMIC DNA]</scope>
    <source>
        <strain>CT_02021853</strain>
    </source>
</reference>